<dbReference type="EMBL" id="AE014295">
    <property type="protein sequence ID" value="AAN25351.1"/>
    <property type="molecule type" value="Genomic_DNA"/>
</dbReference>
<dbReference type="RefSeq" id="NP_696715.1">
    <property type="nucleotide sequence ID" value="NC_004307.2"/>
</dbReference>
<dbReference type="SMR" id="Q8G435"/>
<dbReference type="STRING" id="206672.BL1560"/>
<dbReference type="EnsemblBacteria" id="AAN25351">
    <property type="protein sequence ID" value="AAN25351"/>
    <property type="gene ID" value="BL1560"/>
</dbReference>
<dbReference type="KEGG" id="blo:BL1560"/>
<dbReference type="PATRIC" id="fig|206672.9.peg.1615"/>
<dbReference type="HOGENOM" id="CLU_190949_0_2_11"/>
<dbReference type="OrthoDB" id="21586at2"/>
<dbReference type="PhylomeDB" id="Q8G435"/>
<dbReference type="Proteomes" id="UP000000439">
    <property type="component" value="Chromosome"/>
</dbReference>
<dbReference type="GO" id="GO:0005737">
    <property type="term" value="C:cytoplasm"/>
    <property type="evidence" value="ECO:0007669"/>
    <property type="project" value="UniProtKB-ARBA"/>
</dbReference>
<dbReference type="GO" id="GO:1990904">
    <property type="term" value="C:ribonucleoprotein complex"/>
    <property type="evidence" value="ECO:0007669"/>
    <property type="project" value="UniProtKB-KW"/>
</dbReference>
<dbReference type="GO" id="GO:0005840">
    <property type="term" value="C:ribosome"/>
    <property type="evidence" value="ECO:0007669"/>
    <property type="project" value="UniProtKB-KW"/>
</dbReference>
<dbReference type="GO" id="GO:0003735">
    <property type="term" value="F:structural constituent of ribosome"/>
    <property type="evidence" value="ECO:0007669"/>
    <property type="project" value="InterPro"/>
</dbReference>
<dbReference type="GO" id="GO:0006412">
    <property type="term" value="P:translation"/>
    <property type="evidence" value="ECO:0007669"/>
    <property type="project" value="UniProtKB-UniRule"/>
</dbReference>
<dbReference type="Gene3D" id="2.20.28.120">
    <property type="entry name" value="Ribosomal protein L33"/>
    <property type="match status" value="1"/>
</dbReference>
<dbReference type="HAMAP" id="MF_00294">
    <property type="entry name" value="Ribosomal_bL33"/>
    <property type="match status" value="1"/>
</dbReference>
<dbReference type="InterPro" id="IPR001705">
    <property type="entry name" value="Ribosomal_bL33"/>
</dbReference>
<dbReference type="InterPro" id="IPR018264">
    <property type="entry name" value="Ribosomal_bL33_CS"/>
</dbReference>
<dbReference type="InterPro" id="IPR038584">
    <property type="entry name" value="Ribosomal_bL33_sf"/>
</dbReference>
<dbReference type="InterPro" id="IPR011332">
    <property type="entry name" value="Ribosomal_zn-bd"/>
</dbReference>
<dbReference type="NCBIfam" id="NF001764">
    <property type="entry name" value="PRK00504.1"/>
    <property type="match status" value="1"/>
</dbReference>
<dbReference type="NCBIfam" id="NF001860">
    <property type="entry name" value="PRK00595.1"/>
    <property type="match status" value="1"/>
</dbReference>
<dbReference type="NCBIfam" id="TIGR01023">
    <property type="entry name" value="rpmG_bact"/>
    <property type="match status" value="1"/>
</dbReference>
<dbReference type="PANTHER" id="PTHR43168">
    <property type="entry name" value="50S RIBOSOMAL PROTEIN L33, CHLOROPLASTIC"/>
    <property type="match status" value="1"/>
</dbReference>
<dbReference type="PANTHER" id="PTHR43168:SF2">
    <property type="entry name" value="LARGE RIBOSOMAL SUBUNIT PROTEIN BL33C"/>
    <property type="match status" value="1"/>
</dbReference>
<dbReference type="Pfam" id="PF00471">
    <property type="entry name" value="Ribosomal_L33"/>
    <property type="match status" value="1"/>
</dbReference>
<dbReference type="SUPFAM" id="SSF57829">
    <property type="entry name" value="Zn-binding ribosomal proteins"/>
    <property type="match status" value="1"/>
</dbReference>
<dbReference type="PROSITE" id="PS00582">
    <property type="entry name" value="RIBOSOMAL_L33"/>
    <property type="match status" value="1"/>
</dbReference>
<gene>
    <name evidence="1" type="primary">rpmG</name>
    <name type="ordered locus">BL1560</name>
</gene>
<name>RL33_BIFLO</name>
<reference key="1">
    <citation type="journal article" date="2002" name="Proc. Natl. Acad. Sci. U.S.A.">
        <title>The genome sequence of Bifidobacterium longum reflects its adaptation to the human gastrointestinal tract.</title>
        <authorList>
            <person name="Schell M.A."/>
            <person name="Karmirantzou M."/>
            <person name="Snel B."/>
            <person name="Vilanova D."/>
            <person name="Berger B."/>
            <person name="Pessi G."/>
            <person name="Zwahlen M.-C."/>
            <person name="Desiere F."/>
            <person name="Bork P."/>
            <person name="Delley M."/>
            <person name="Pridmore R.D."/>
            <person name="Arigoni F."/>
        </authorList>
    </citation>
    <scope>NUCLEOTIDE SEQUENCE [LARGE SCALE GENOMIC DNA]</scope>
    <source>
        <strain>NCC 2705</strain>
    </source>
</reference>
<evidence type="ECO:0000255" key="1">
    <source>
        <dbReference type="HAMAP-Rule" id="MF_00294"/>
    </source>
</evidence>
<evidence type="ECO:0000305" key="2"/>
<protein>
    <recommendedName>
        <fullName evidence="1">Large ribosomal subunit protein bL33</fullName>
    </recommendedName>
    <alternativeName>
        <fullName evidence="2">50S ribosomal protein L33</fullName>
    </alternativeName>
</protein>
<proteinExistence type="inferred from homology"/>
<accession>Q8G435</accession>
<comment type="similarity">
    <text evidence="1">Belongs to the bacterial ribosomal protein bL33 family.</text>
</comment>
<organism>
    <name type="scientific">Bifidobacterium longum (strain NCC 2705)</name>
    <dbReference type="NCBI Taxonomy" id="206672"/>
    <lineage>
        <taxon>Bacteria</taxon>
        <taxon>Bacillati</taxon>
        <taxon>Actinomycetota</taxon>
        <taxon>Actinomycetes</taxon>
        <taxon>Bifidobacteriales</taxon>
        <taxon>Bifidobacteriaceae</taxon>
        <taxon>Bifidobacterium</taxon>
    </lineage>
</organism>
<feature type="chain" id="PRO_0000356401" description="Large ribosomal subunit protein bL33">
    <location>
        <begin position="1"/>
        <end position="57"/>
    </location>
</feature>
<sequence>MTMAKSADIRPGITLACTECKERNYITTKNRRNTPDRLELKKFCPRCGKQTVHRETR</sequence>
<keyword id="KW-1185">Reference proteome</keyword>
<keyword id="KW-0687">Ribonucleoprotein</keyword>
<keyword id="KW-0689">Ribosomal protein</keyword>